<accession>O83053</accession>
<reference key="1">
    <citation type="journal article" date="1998" name="Science">
        <title>Complete genome sequence of Treponema pallidum, the syphilis spirochete.</title>
        <authorList>
            <person name="Fraser C.M."/>
            <person name="Norris S.J."/>
            <person name="Weinstock G.M."/>
            <person name="White O."/>
            <person name="Sutton G.G."/>
            <person name="Dodson R.J."/>
            <person name="Gwinn M.L."/>
            <person name="Hickey E.K."/>
            <person name="Clayton R.A."/>
            <person name="Ketchum K.A."/>
            <person name="Sodergren E."/>
            <person name="Hardham J.M."/>
            <person name="McLeod M.P."/>
            <person name="Salzberg S.L."/>
            <person name="Peterson J.D."/>
            <person name="Khalak H.G."/>
            <person name="Richardson D.L."/>
            <person name="Howell J.K."/>
            <person name="Chidambaram M."/>
            <person name="Utterback T.R."/>
            <person name="McDonald L.A."/>
            <person name="Artiach P."/>
            <person name="Bowman C."/>
            <person name="Cotton M.D."/>
            <person name="Fujii C."/>
            <person name="Garland S.A."/>
            <person name="Hatch B."/>
            <person name="Horst K."/>
            <person name="Roberts K.M."/>
            <person name="Sandusky M."/>
            <person name="Weidman J.F."/>
            <person name="Smith H.O."/>
            <person name="Venter J.C."/>
        </authorList>
    </citation>
    <scope>NUCLEOTIDE SEQUENCE [LARGE SCALE GENOMIC DNA]</scope>
    <source>
        <strain>Nichols</strain>
    </source>
</reference>
<gene>
    <name type="ordered locus">TP_0008</name>
</gene>
<keyword id="KW-1185">Reference proteome</keyword>
<protein>
    <recommendedName>
        <fullName>Uncharacterized protein TP_0008</fullName>
    </recommendedName>
</protein>
<feature type="chain" id="PRO_0000202172" description="Uncharacterized protein TP_0008">
    <location>
        <begin position="1"/>
        <end position="89"/>
    </location>
</feature>
<sequence>MTMGFVEYARKIIDGEPRKDDMREALAESFDLFTRDAHWRIAPYLRLKTHEIVPNHVLVYTDTYVLGKFTLPVTDQVLPEGYWALTAKE</sequence>
<dbReference type="EMBL" id="AE000520">
    <property type="protein sequence ID" value="AAC65004.1"/>
    <property type="molecule type" value="Genomic_DNA"/>
</dbReference>
<dbReference type="PIR" id="G71378">
    <property type="entry name" value="G71378"/>
</dbReference>
<dbReference type="RefSeq" id="WP_010881458.1">
    <property type="nucleotide sequence ID" value="NC_000919.1"/>
</dbReference>
<dbReference type="STRING" id="243276.TP_0008"/>
<dbReference type="EnsemblBacteria" id="AAC65004">
    <property type="protein sequence ID" value="AAC65004"/>
    <property type="gene ID" value="TP_0008"/>
</dbReference>
<dbReference type="KEGG" id="tpa:TP_0008"/>
<dbReference type="HOGENOM" id="CLU_2453730_0_0_12"/>
<dbReference type="Proteomes" id="UP000000811">
    <property type="component" value="Chromosome"/>
</dbReference>
<proteinExistence type="predicted"/>
<name>Y008_TREPA</name>
<organism>
    <name type="scientific">Treponema pallidum (strain Nichols)</name>
    <dbReference type="NCBI Taxonomy" id="243276"/>
    <lineage>
        <taxon>Bacteria</taxon>
        <taxon>Pseudomonadati</taxon>
        <taxon>Spirochaetota</taxon>
        <taxon>Spirochaetia</taxon>
        <taxon>Spirochaetales</taxon>
        <taxon>Treponemataceae</taxon>
        <taxon>Treponema</taxon>
    </lineage>
</organism>